<dbReference type="EC" id="2.7.7.75"/>
<dbReference type="EMBL" id="AE009950">
    <property type="protein sequence ID" value="AAL80496.1"/>
    <property type="molecule type" value="Genomic_DNA"/>
</dbReference>
<dbReference type="RefSeq" id="WP_011011486.1">
    <property type="nucleotide sequence ID" value="NZ_CP023154.1"/>
</dbReference>
<dbReference type="PDB" id="4LHB">
    <property type="method" value="X-ray"/>
    <property type="resolution" value="2.50 A"/>
    <property type="chains" value="A/B/C=1-169"/>
</dbReference>
<dbReference type="PDBsum" id="4LHB"/>
<dbReference type="SMR" id="Q8U3T3"/>
<dbReference type="STRING" id="186497.PF0372"/>
<dbReference type="PaxDb" id="186497-PF0372"/>
<dbReference type="KEGG" id="pfu:PF0372"/>
<dbReference type="PATRIC" id="fig|186497.12.peg.387"/>
<dbReference type="eggNOG" id="arCOG00214">
    <property type="taxonomic scope" value="Archaea"/>
</dbReference>
<dbReference type="HOGENOM" id="CLU_077358_2_3_2"/>
<dbReference type="OrthoDB" id="205337at2157"/>
<dbReference type="PhylomeDB" id="Q8U3T3"/>
<dbReference type="BioCyc" id="MetaCyc:MONOMER-21135"/>
<dbReference type="EvolutionaryTrace" id="Q8U3T3"/>
<dbReference type="Proteomes" id="UP000001013">
    <property type="component" value="Chromosome"/>
</dbReference>
<dbReference type="GO" id="GO:0005829">
    <property type="term" value="C:cytosol"/>
    <property type="evidence" value="ECO:0007669"/>
    <property type="project" value="TreeGrafter"/>
</dbReference>
<dbReference type="GO" id="GO:0005524">
    <property type="term" value="F:ATP binding"/>
    <property type="evidence" value="ECO:0007669"/>
    <property type="project" value="UniProtKB-KW"/>
</dbReference>
<dbReference type="GO" id="GO:0061598">
    <property type="term" value="F:molybdopterin adenylyltransferase activity"/>
    <property type="evidence" value="ECO:0007669"/>
    <property type="project" value="UniProtKB-EC"/>
</dbReference>
<dbReference type="GO" id="GO:0006777">
    <property type="term" value="P:Mo-molybdopterin cofactor biosynthetic process"/>
    <property type="evidence" value="ECO:0007669"/>
    <property type="project" value="UniProtKB-KW"/>
</dbReference>
<dbReference type="CDD" id="cd00886">
    <property type="entry name" value="MogA_MoaB"/>
    <property type="match status" value="1"/>
</dbReference>
<dbReference type="Gene3D" id="3.40.980.10">
    <property type="entry name" value="MoaB/Mog-like domain"/>
    <property type="match status" value="1"/>
</dbReference>
<dbReference type="InterPro" id="IPR012245">
    <property type="entry name" value="MoaB"/>
</dbReference>
<dbReference type="InterPro" id="IPR036425">
    <property type="entry name" value="MoaB/Mog-like_dom_sf"/>
</dbReference>
<dbReference type="InterPro" id="IPR001453">
    <property type="entry name" value="MoaB/Mog_dom"/>
</dbReference>
<dbReference type="InterPro" id="IPR008284">
    <property type="entry name" value="MoCF_biosynth_CS"/>
</dbReference>
<dbReference type="NCBIfam" id="TIGR00177">
    <property type="entry name" value="molyb_syn"/>
    <property type="match status" value="1"/>
</dbReference>
<dbReference type="PANTHER" id="PTHR43232">
    <property type="entry name" value="MOLYBDENUM COFACTOR BIOSYNTHESIS PROTEIN B"/>
    <property type="match status" value="1"/>
</dbReference>
<dbReference type="PANTHER" id="PTHR43232:SF2">
    <property type="entry name" value="MOLYBDENUM COFACTOR BIOSYNTHESIS PROTEIN B"/>
    <property type="match status" value="1"/>
</dbReference>
<dbReference type="Pfam" id="PF00994">
    <property type="entry name" value="MoCF_biosynth"/>
    <property type="match status" value="1"/>
</dbReference>
<dbReference type="PIRSF" id="PIRSF006443">
    <property type="entry name" value="MoaB"/>
    <property type="match status" value="1"/>
</dbReference>
<dbReference type="SMART" id="SM00852">
    <property type="entry name" value="MoCF_biosynth"/>
    <property type="match status" value="1"/>
</dbReference>
<dbReference type="SUPFAM" id="SSF53218">
    <property type="entry name" value="Molybdenum cofactor biosynthesis proteins"/>
    <property type="match status" value="1"/>
</dbReference>
<dbReference type="PROSITE" id="PS01078">
    <property type="entry name" value="MOCF_BIOSYNTHESIS_1"/>
    <property type="match status" value="1"/>
</dbReference>
<sequence length="169" mass="18573">MGVEEHKKEAPKTFKFGVITVSDKGAKGEREDKSGPLIIEELSKLGEHVYYKIVPDDKIEVLIALFEAIKSGADVVVTTGGTGITRRDITIESIKPLFDKELSFGEVFRAKSYEEVGYATVLTRATAGIIRGQERIVVVFSLPGSVNAVKTGLEIIKSEVFHILKHARE</sequence>
<name>MOAB_PYRFU</name>
<keyword id="KW-0002">3D-structure</keyword>
<keyword id="KW-0067">ATP-binding</keyword>
<keyword id="KW-0501">Molybdenum cofactor biosynthesis</keyword>
<keyword id="KW-0547">Nucleotide-binding</keyword>
<keyword id="KW-1185">Reference proteome</keyword>
<keyword id="KW-0808">Transferase</keyword>
<organism>
    <name type="scientific">Pyrococcus furiosus (strain ATCC 43587 / DSM 3638 / JCM 8422 / Vc1)</name>
    <dbReference type="NCBI Taxonomy" id="186497"/>
    <lineage>
        <taxon>Archaea</taxon>
        <taxon>Methanobacteriati</taxon>
        <taxon>Methanobacteriota</taxon>
        <taxon>Thermococci</taxon>
        <taxon>Thermococcales</taxon>
        <taxon>Thermococcaceae</taxon>
        <taxon>Pyrococcus</taxon>
    </lineage>
</organism>
<protein>
    <recommendedName>
        <fullName>Molybdopterin adenylyltransferase</fullName>
        <shortName>MPT adenylyltransferase</shortName>
        <ecNumber>2.7.7.75</ecNumber>
    </recommendedName>
</protein>
<feature type="chain" id="PRO_0000392068" description="Molybdopterin adenylyltransferase">
    <location>
        <begin position="1"/>
        <end position="169"/>
    </location>
</feature>
<feature type="mutagenesis site" description="10-fold reduction of activity." evidence="1">
    <original>D</original>
    <variation>A</variation>
    <location>
        <position position="32"/>
    </location>
</feature>
<feature type="mutagenesis site" description="Complete loss of activity." evidence="1">
    <original>D</original>
    <variation>A</variation>
    <location>
        <position position="56"/>
    </location>
</feature>
<feature type="mutagenesis site" description="No effect on activity." evidence="1">
    <original>D</original>
    <variation>E</variation>
    <location>
        <position position="57"/>
    </location>
</feature>
<feature type="mutagenesis site" description="Little effect on activity." evidence="1">
    <original>S</original>
    <variation>A</variation>
    <location>
        <position position="112"/>
    </location>
</feature>
<feature type="strand" evidence="3">
    <location>
        <begin position="15"/>
        <end position="21"/>
    </location>
</feature>
<feature type="helix" evidence="3">
    <location>
        <begin position="23"/>
        <end position="26"/>
    </location>
</feature>
<feature type="helix" evidence="3">
    <location>
        <begin position="34"/>
        <end position="43"/>
    </location>
</feature>
<feature type="strand" evidence="3">
    <location>
        <begin position="46"/>
        <end position="54"/>
    </location>
</feature>
<feature type="helix" evidence="3">
    <location>
        <begin position="58"/>
        <end position="70"/>
    </location>
</feature>
<feature type="strand" evidence="3">
    <location>
        <begin position="74"/>
        <end position="80"/>
    </location>
</feature>
<feature type="strand" evidence="3">
    <location>
        <begin position="83"/>
        <end position="85"/>
    </location>
</feature>
<feature type="helix" evidence="3">
    <location>
        <begin position="90"/>
        <end position="94"/>
    </location>
</feature>
<feature type="helix" evidence="3">
    <location>
        <begin position="95"/>
        <end position="97"/>
    </location>
</feature>
<feature type="strand" evidence="3">
    <location>
        <begin position="99"/>
        <end position="101"/>
    </location>
</feature>
<feature type="helix" evidence="3">
    <location>
        <begin position="104"/>
        <end position="116"/>
    </location>
</feature>
<feature type="helix" evidence="3">
    <location>
        <begin position="117"/>
        <end position="122"/>
    </location>
</feature>
<feature type="strand" evidence="3">
    <location>
        <begin position="126"/>
        <end position="131"/>
    </location>
</feature>
<feature type="strand" evidence="3">
    <location>
        <begin position="136"/>
        <end position="142"/>
    </location>
</feature>
<feature type="helix" evidence="3">
    <location>
        <begin position="146"/>
        <end position="167"/>
    </location>
</feature>
<evidence type="ECO:0000269" key="1">
    <source>
    </source>
</evidence>
<evidence type="ECO:0000305" key="2"/>
<evidence type="ECO:0007829" key="3">
    <source>
        <dbReference type="PDB" id="4LHB"/>
    </source>
</evidence>
<accession>Q8U3T3</accession>
<comment type="function">
    <text evidence="1">Catalyzes the adenylation of molybdopterin as part of the biosynthesis of the molybdenum-cofactor.</text>
</comment>
<comment type="catalytic activity">
    <reaction evidence="1">
        <text>molybdopterin + ATP + H(+) = adenylyl-molybdopterin + diphosphate</text>
        <dbReference type="Rhea" id="RHEA:31331"/>
        <dbReference type="ChEBI" id="CHEBI:15378"/>
        <dbReference type="ChEBI" id="CHEBI:30616"/>
        <dbReference type="ChEBI" id="CHEBI:33019"/>
        <dbReference type="ChEBI" id="CHEBI:58698"/>
        <dbReference type="ChEBI" id="CHEBI:62727"/>
        <dbReference type="EC" id="2.7.7.75"/>
    </reaction>
</comment>
<comment type="biophysicochemical properties">
    <kinetics>
        <KM evidence="1">225 uM for ATP</KM>
        <Vmax evidence="1">18.6 pmol/min/mg enzyme</Vmax>
    </kinetics>
    <temperatureDependence>
        <text evidence="1">Optimum temperature is &gt;80 degrees Celsius.</text>
    </temperatureDependence>
</comment>
<comment type="subunit">
    <text evidence="1">Homohexamer.</text>
</comment>
<comment type="similarity">
    <text evidence="2">Belongs to the MoaB/Mog family.</text>
</comment>
<proteinExistence type="evidence at protein level"/>
<reference key="1">
    <citation type="journal article" date="1999" name="Genetics">
        <title>Divergence of the hyperthermophilic archaea Pyrococcus furiosus and P. horikoshii inferred from complete genomic sequences.</title>
        <authorList>
            <person name="Maeder D.L."/>
            <person name="Weiss R.B."/>
            <person name="Dunn D.M."/>
            <person name="Cherry J.L."/>
            <person name="Gonzalez J.M."/>
            <person name="DiRuggiero J."/>
            <person name="Robb F.T."/>
        </authorList>
    </citation>
    <scope>NUCLEOTIDE SEQUENCE [LARGE SCALE GENOMIC DNA]</scope>
    <source>
        <strain>ATCC 43587 / DSM 3638 / JCM 8422 / Vc1</strain>
    </source>
</reference>
<reference key="2">
    <citation type="journal article" date="2008" name="Biochemistry">
        <title>Function of MoaB proteins in the biosynthesis of the molybdenum and tungsten cofactors.</title>
        <authorList>
            <person name="Bevers L.E."/>
            <person name="Hagedoorn P.L."/>
            <person name="Santamaria-Araujo J.A."/>
            <person name="Magalon A."/>
            <person name="Hagen W.R."/>
            <person name="Schwarz G."/>
        </authorList>
    </citation>
    <scope>FUNCTION</scope>
    <scope>CATALYTIC ACTIVITY</scope>
    <scope>MUTAGENESIS OF ASP-32; ASP-56; ASP-57 AND SER-112</scope>
    <scope>SUBUNIT</scope>
    <scope>BIOPHYSICOCHEMICAL PROPERTIES</scope>
</reference>
<gene>
    <name type="primary">moaB</name>
    <name type="ordered locus">PF0372</name>
</gene>